<reference key="1">
    <citation type="journal article" date="2004" name="Genome Res.">
        <title>The status, quality, and expansion of the NIH full-length cDNA project: the Mammalian Gene Collection (MGC).</title>
        <authorList>
            <consortium name="The MGC Project Team"/>
        </authorList>
    </citation>
    <scope>NUCLEOTIDE SEQUENCE [LARGE SCALE MRNA]</scope>
</reference>
<reference key="2">
    <citation type="journal article" date="2005" name="Science">
        <title>The transcriptional landscape of the mammalian genome.</title>
        <authorList>
            <person name="Carninci P."/>
            <person name="Kasukawa T."/>
            <person name="Katayama S."/>
            <person name="Gough J."/>
            <person name="Frith M.C."/>
            <person name="Maeda N."/>
            <person name="Oyama R."/>
            <person name="Ravasi T."/>
            <person name="Lenhard B."/>
            <person name="Wells C."/>
            <person name="Kodzius R."/>
            <person name="Shimokawa K."/>
            <person name="Bajic V.B."/>
            <person name="Brenner S.E."/>
            <person name="Batalov S."/>
            <person name="Forrest A.R."/>
            <person name="Zavolan M."/>
            <person name="Davis M.J."/>
            <person name="Wilming L.G."/>
            <person name="Aidinis V."/>
            <person name="Allen J.E."/>
            <person name="Ambesi-Impiombato A."/>
            <person name="Apweiler R."/>
            <person name="Aturaliya R.N."/>
            <person name="Bailey T.L."/>
            <person name="Bansal M."/>
            <person name="Baxter L."/>
            <person name="Beisel K.W."/>
            <person name="Bersano T."/>
            <person name="Bono H."/>
            <person name="Chalk A.M."/>
            <person name="Chiu K.P."/>
            <person name="Choudhary V."/>
            <person name="Christoffels A."/>
            <person name="Clutterbuck D.R."/>
            <person name="Crowe M.L."/>
            <person name="Dalla E."/>
            <person name="Dalrymple B.P."/>
            <person name="de Bono B."/>
            <person name="Della Gatta G."/>
            <person name="di Bernardo D."/>
            <person name="Down T."/>
            <person name="Engstrom P."/>
            <person name="Fagiolini M."/>
            <person name="Faulkner G."/>
            <person name="Fletcher C.F."/>
            <person name="Fukushima T."/>
            <person name="Furuno M."/>
            <person name="Futaki S."/>
            <person name="Gariboldi M."/>
            <person name="Georgii-Hemming P."/>
            <person name="Gingeras T.R."/>
            <person name="Gojobori T."/>
            <person name="Green R.E."/>
            <person name="Gustincich S."/>
            <person name="Harbers M."/>
            <person name="Hayashi Y."/>
            <person name="Hensch T.K."/>
            <person name="Hirokawa N."/>
            <person name="Hill D."/>
            <person name="Huminiecki L."/>
            <person name="Iacono M."/>
            <person name="Ikeo K."/>
            <person name="Iwama A."/>
            <person name="Ishikawa T."/>
            <person name="Jakt M."/>
            <person name="Kanapin A."/>
            <person name="Katoh M."/>
            <person name="Kawasawa Y."/>
            <person name="Kelso J."/>
            <person name="Kitamura H."/>
            <person name="Kitano H."/>
            <person name="Kollias G."/>
            <person name="Krishnan S.P."/>
            <person name="Kruger A."/>
            <person name="Kummerfeld S.K."/>
            <person name="Kurochkin I.V."/>
            <person name="Lareau L.F."/>
            <person name="Lazarevic D."/>
            <person name="Lipovich L."/>
            <person name="Liu J."/>
            <person name="Liuni S."/>
            <person name="McWilliam S."/>
            <person name="Madan Babu M."/>
            <person name="Madera M."/>
            <person name="Marchionni L."/>
            <person name="Matsuda H."/>
            <person name="Matsuzawa S."/>
            <person name="Miki H."/>
            <person name="Mignone F."/>
            <person name="Miyake S."/>
            <person name="Morris K."/>
            <person name="Mottagui-Tabar S."/>
            <person name="Mulder N."/>
            <person name="Nakano N."/>
            <person name="Nakauchi H."/>
            <person name="Ng P."/>
            <person name="Nilsson R."/>
            <person name="Nishiguchi S."/>
            <person name="Nishikawa S."/>
            <person name="Nori F."/>
            <person name="Ohara O."/>
            <person name="Okazaki Y."/>
            <person name="Orlando V."/>
            <person name="Pang K.C."/>
            <person name="Pavan W.J."/>
            <person name="Pavesi G."/>
            <person name="Pesole G."/>
            <person name="Petrovsky N."/>
            <person name="Piazza S."/>
            <person name="Reed J."/>
            <person name="Reid J.F."/>
            <person name="Ring B.Z."/>
            <person name="Ringwald M."/>
            <person name="Rost B."/>
            <person name="Ruan Y."/>
            <person name="Salzberg S.L."/>
            <person name="Sandelin A."/>
            <person name="Schneider C."/>
            <person name="Schoenbach C."/>
            <person name="Sekiguchi K."/>
            <person name="Semple C.A."/>
            <person name="Seno S."/>
            <person name="Sessa L."/>
            <person name="Sheng Y."/>
            <person name="Shibata Y."/>
            <person name="Shimada H."/>
            <person name="Shimada K."/>
            <person name="Silva D."/>
            <person name="Sinclair B."/>
            <person name="Sperling S."/>
            <person name="Stupka E."/>
            <person name="Sugiura K."/>
            <person name="Sultana R."/>
            <person name="Takenaka Y."/>
            <person name="Taki K."/>
            <person name="Tammoja K."/>
            <person name="Tan S.L."/>
            <person name="Tang S."/>
            <person name="Taylor M.S."/>
            <person name="Tegner J."/>
            <person name="Teichmann S.A."/>
            <person name="Ueda H.R."/>
            <person name="van Nimwegen E."/>
            <person name="Verardo R."/>
            <person name="Wei C.L."/>
            <person name="Yagi K."/>
            <person name="Yamanishi H."/>
            <person name="Zabarovsky E."/>
            <person name="Zhu S."/>
            <person name="Zimmer A."/>
            <person name="Hide W."/>
            <person name="Bult C."/>
            <person name="Grimmond S.M."/>
            <person name="Teasdale R.D."/>
            <person name="Liu E.T."/>
            <person name="Brusic V."/>
            <person name="Quackenbush J."/>
            <person name="Wahlestedt C."/>
            <person name="Mattick J.S."/>
            <person name="Hume D.A."/>
            <person name="Kai C."/>
            <person name="Sasaki D."/>
            <person name="Tomaru Y."/>
            <person name="Fukuda S."/>
            <person name="Kanamori-Katayama M."/>
            <person name="Suzuki M."/>
            <person name="Aoki J."/>
            <person name="Arakawa T."/>
            <person name="Iida J."/>
            <person name="Imamura K."/>
            <person name="Itoh M."/>
            <person name="Kato T."/>
            <person name="Kawaji H."/>
            <person name="Kawagashira N."/>
            <person name="Kawashima T."/>
            <person name="Kojima M."/>
            <person name="Kondo S."/>
            <person name="Konno H."/>
            <person name="Nakano K."/>
            <person name="Ninomiya N."/>
            <person name="Nishio T."/>
            <person name="Okada M."/>
            <person name="Plessy C."/>
            <person name="Shibata K."/>
            <person name="Shiraki T."/>
            <person name="Suzuki S."/>
            <person name="Tagami M."/>
            <person name="Waki K."/>
            <person name="Watahiki A."/>
            <person name="Okamura-Oho Y."/>
            <person name="Suzuki H."/>
            <person name="Kawai J."/>
            <person name="Hayashizaki Y."/>
        </authorList>
    </citation>
    <scope>NUCLEOTIDE SEQUENCE [LARGE SCALE MRNA] OF 325-620</scope>
    <source>
        <strain>C57BL/6J</strain>
        <tissue>Embryo</tissue>
    </source>
</reference>
<reference key="3">
    <citation type="journal article" date="2010" name="Cell">
        <title>A tissue-specific atlas of mouse protein phosphorylation and expression.</title>
        <authorList>
            <person name="Huttlin E.L."/>
            <person name="Jedrychowski M.P."/>
            <person name="Elias J.E."/>
            <person name="Goswami T."/>
            <person name="Rad R."/>
            <person name="Beausoleil S.A."/>
            <person name="Villen J."/>
            <person name="Haas W."/>
            <person name="Sowa M.E."/>
            <person name="Gygi S.P."/>
        </authorList>
    </citation>
    <scope>PHOSPHORYLATION [LARGE SCALE ANALYSIS] AT SER-560</scope>
    <scope>IDENTIFICATION BY MASS SPECTROMETRY [LARGE SCALE ANALYSIS]</scope>
    <source>
        <tissue>Brain</tissue>
        <tissue>Kidney</tissue>
        <tissue>Liver</tissue>
        <tissue>Lung</tissue>
        <tissue>Pancreas</tissue>
        <tissue>Spleen</tissue>
        <tissue>Testis</tissue>
    </source>
</reference>
<comment type="function">
    <text evidence="1">Component of the anaphase promoting complex/cyclosome (APC/C), a cell cycle-regulated E3 ubiquitin ligase that controls progression through mitosis and the G1 phase of the cell cycle. The APC/C complex acts by mediating ubiquitination and subsequent degradation of target proteins: it mainly mediates the formation of 'Lys-11'-linked polyubiquitin chains and, to a lower extent, the formation of 'Lys-48'- and 'Lys-63'-linked polyubiquitin chains. The APC/C complex catalyzes assembly of branched 'Lys-11'-/'Lys-48'-linked branched ubiquitin chains on target proteins.</text>
</comment>
<comment type="pathway">
    <text evidence="1">Protein modification; protein ubiquitination.</text>
</comment>
<comment type="subunit">
    <text evidence="1">V-shaped homodimer. The mammalian APC/C is composed at least of 14 distinct subunits ANAPC1, ANAPC2, CDC27/APC3, ANAPC4, ANAPC5, CDC16/APC6, ANAPC7, CDC23/APC8, ANAPC10, ANAPC11, CDC26/APC12, ANAPC13, ANAPC15 and ANAPC16 that assemble into a complex of at least 19 chains with a combined molecular mass of around 1.2 MDa; APC/C interacts with FZR1 and FBXO5. Interacts with PPP5C and CDC20. Interacts with CDC26. Interacts with FBXO43.</text>
</comment>
<comment type="domain">
    <text evidence="1">TPR repeats 1-7 mediate homodimerization, while the C-terminal TPR repeats bind to CDC26, burying its hydrophobic N-terminus.</text>
</comment>
<comment type="PTM">
    <text evidence="1">Phosphorylated. Phosphorylation on Ser-560 occurs specifically during mitosis (By similarity).</text>
</comment>
<comment type="similarity">
    <text evidence="3">Belongs to the APC6/CDC16 family.</text>
</comment>
<comment type="sequence caution" evidence="3">
    <conflict type="miscellaneous discrepancy">
        <sequence resource="EMBL-CDS" id="BAB28717"/>
    </conflict>
    <text>Intron retention.</text>
</comment>
<proteinExistence type="evidence at protein level"/>
<keyword id="KW-0131">Cell cycle</keyword>
<keyword id="KW-0132">Cell division</keyword>
<keyword id="KW-0498">Mitosis</keyword>
<keyword id="KW-0597">Phosphoprotein</keyword>
<keyword id="KW-1185">Reference proteome</keyword>
<keyword id="KW-0677">Repeat</keyword>
<keyword id="KW-0802">TPR repeat</keyword>
<keyword id="KW-0833">Ubl conjugation pathway</keyword>
<name>CDC16_MOUSE</name>
<protein>
    <recommendedName>
        <fullName>Cell division cycle protein 16 homolog</fullName>
    </recommendedName>
    <alternativeName>
        <fullName>Anaphase-promoting complex subunit 6</fullName>
        <shortName>APC6</shortName>
    </alternativeName>
    <alternativeName>
        <fullName>Cyclosome subunit 6</fullName>
    </alternativeName>
</protein>
<accession>Q8R349</accession>
<accession>Q9CYX9</accession>
<dbReference type="EMBL" id="BC026606">
    <property type="protein sequence ID" value="AAH26606.1"/>
    <property type="molecule type" value="mRNA"/>
</dbReference>
<dbReference type="EMBL" id="AK013213">
    <property type="protein sequence ID" value="BAB28717.1"/>
    <property type="status" value="ALT_SEQ"/>
    <property type="molecule type" value="mRNA"/>
</dbReference>
<dbReference type="CCDS" id="CCDS22114.1"/>
<dbReference type="RefSeq" id="NP_081552.2">
    <property type="nucleotide sequence ID" value="NM_027276.3"/>
</dbReference>
<dbReference type="SMR" id="Q8R349"/>
<dbReference type="BioGRID" id="213776">
    <property type="interactions" value="55"/>
</dbReference>
<dbReference type="CORUM" id="Q8R349"/>
<dbReference type="FunCoup" id="Q8R349">
    <property type="interactions" value="4199"/>
</dbReference>
<dbReference type="IntAct" id="Q8R349">
    <property type="interactions" value="49"/>
</dbReference>
<dbReference type="STRING" id="10090.ENSMUSP00000047950"/>
<dbReference type="GlyGen" id="Q8R349">
    <property type="glycosylation" value="2 sites, 2 N-linked glycans (2 sites)"/>
</dbReference>
<dbReference type="iPTMnet" id="Q8R349"/>
<dbReference type="PhosphoSitePlus" id="Q8R349"/>
<dbReference type="SwissPalm" id="Q8R349"/>
<dbReference type="jPOST" id="Q8R349"/>
<dbReference type="PaxDb" id="10090-ENSMUSP00000047950"/>
<dbReference type="ProteomicsDB" id="283763"/>
<dbReference type="Pumba" id="Q8R349"/>
<dbReference type="Antibodypedia" id="11890">
    <property type="antibodies" value="419 antibodies from 40 providers"/>
</dbReference>
<dbReference type="DNASU" id="69957"/>
<dbReference type="Ensembl" id="ENSMUST00000043962.9">
    <property type="protein sequence ID" value="ENSMUSP00000047950.9"/>
    <property type="gene ID" value="ENSMUSG00000038416.16"/>
</dbReference>
<dbReference type="GeneID" id="69957"/>
<dbReference type="KEGG" id="mmu:69957"/>
<dbReference type="UCSC" id="uc009kyi.1">
    <property type="organism name" value="mouse"/>
</dbReference>
<dbReference type="AGR" id="MGI:1917207"/>
<dbReference type="CTD" id="8881"/>
<dbReference type="MGI" id="MGI:1917207">
    <property type="gene designation" value="Cdc16"/>
</dbReference>
<dbReference type="VEuPathDB" id="HostDB:ENSMUSG00000038416"/>
<dbReference type="eggNOG" id="KOG1173">
    <property type="taxonomic scope" value="Eukaryota"/>
</dbReference>
<dbReference type="GeneTree" id="ENSGT00950000182950"/>
<dbReference type="HOGENOM" id="CLU_011751_3_2_1"/>
<dbReference type="InParanoid" id="Q8R349"/>
<dbReference type="OMA" id="DPFHNNA"/>
<dbReference type="OrthoDB" id="10006270at2759"/>
<dbReference type="PhylomeDB" id="Q8R349"/>
<dbReference type="TreeFam" id="TF101054"/>
<dbReference type="Reactome" id="R-MMU-141430">
    <property type="pathway name" value="Inactivation of APC/C via direct inhibition of the APC/C complex"/>
</dbReference>
<dbReference type="Reactome" id="R-MMU-174048">
    <property type="pathway name" value="APC/C:Cdc20 mediated degradation of Cyclin B"/>
</dbReference>
<dbReference type="Reactome" id="R-MMU-174084">
    <property type="pathway name" value="Autodegradation of Cdh1 by Cdh1:APC/C"/>
</dbReference>
<dbReference type="Reactome" id="R-MMU-174154">
    <property type="pathway name" value="APC/C:Cdc20 mediated degradation of Securin"/>
</dbReference>
<dbReference type="Reactome" id="R-MMU-174178">
    <property type="pathway name" value="APC/C:Cdh1 mediated degradation of Cdc20 and other APC/C:Cdh1 targeted proteins in late mitosis/early G1"/>
</dbReference>
<dbReference type="Reactome" id="R-MMU-174184">
    <property type="pathway name" value="Cdc20:Phospho-APC/C mediated degradation of Cyclin A"/>
</dbReference>
<dbReference type="Reactome" id="R-MMU-176407">
    <property type="pathway name" value="Conversion from APC/C:Cdc20 to APC/C:Cdh1 in late anaphase"/>
</dbReference>
<dbReference type="Reactome" id="R-MMU-176408">
    <property type="pathway name" value="Regulation of APC/C activators between G1/S and early anaphase"/>
</dbReference>
<dbReference type="Reactome" id="R-MMU-176409">
    <property type="pathway name" value="APC/C:Cdc20 mediated degradation of mitotic proteins"/>
</dbReference>
<dbReference type="Reactome" id="R-MMU-176412">
    <property type="pathway name" value="Phosphorylation of the APC/C"/>
</dbReference>
<dbReference type="Reactome" id="R-MMU-179409">
    <property type="pathway name" value="APC-Cdc20 mediated degradation of Nek2A"/>
</dbReference>
<dbReference type="Reactome" id="R-MMU-2467813">
    <property type="pathway name" value="Separation of Sister Chromatids"/>
</dbReference>
<dbReference type="Reactome" id="R-MMU-2559582">
    <property type="pathway name" value="Senescence-Associated Secretory Phenotype (SASP)"/>
</dbReference>
<dbReference type="Reactome" id="R-MMU-68867">
    <property type="pathway name" value="Assembly of the pre-replicative complex"/>
</dbReference>
<dbReference type="Reactome" id="R-MMU-69017">
    <property type="pathway name" value="CDK-mediated phosphorylation and removal of Cdc6"/>
</dbReference>
<dbReference type="Reactome" id="R-MMU-983168">
    <property type="pathway name" value="Antigen processing: Ubiquitination &amp; Proteasome degradation"/>
</dbReference>
<dbReference type="UniPathway" id="UPA00143"/>
<dbReference type="BioGRID-ORCS" id="69957">
    <property type="hits" value="29 hits in 78 CRISPR screens"/>
</dbReference>
<dbReference type="ChiTaRS" id="Cdc16">
    <property type="organism name" value="mouse"/>
</dbReference>
<dbReference type="PRO" id="PR:Q8R349"/>
<dbReference type="Proteomes" id="UP000000589">
    <property type="component" value="Chromosome 8"/>
</dbReference>
<dbReference type="RNAct" id="Q8R349">
    <property type="molecule type" value="protein"/>
</dbReference>
<dbReference type="Bgee" id="ENSMUSG00000038416">
    <property type="expression patterns" value="Expressed in floor plate of midbrain and 275 other cell types or tissues"/>
</dbReference>
<dbReference type="ExpressionAtlas" id="Q8R349">
    <property type="expression patterns" value="baseline and differential"/>
</dbReference>
<dbReference type="GO" id="GO:0005680">
    <property type="term" value="C:anaphase-promoting complex"/>
    <property type="evidence" value="ECO:0000250"/>
    <property type="project" value="UniProtKB"/>
</dbReference>
<dbReference type="GO" id="GO:0005813">
    <property type="term" value="C:centrosome"/>
    <property type="evidence" value="ECO:0000266"/>
    <property type="project" value="MGI"/>
</dbReference>
<dbReference type="GO" id="GO:0005737">
    <property type="term" value="C:cytoplasm"/>
    <property type="evidence" value="ECO:0007669"/>
    <property type="project" value="Ensembl"/>
</dbReference>
<dbReference type="GO" id="GO:0072686">
    <property type="term" value="C:mitotic spindle"/>
    <property type="evidence" value="ECO:0000266"/>
    <property type="project" value="MGI"/>
</dbReference>
<dbReference type="GO" id="GO:0005634">
    <property type="term" value="C:nucleus"/>
    <property type="evidence" value="ECO:0000314"/>
    <property type="project" value="MGI"/>
</dbReference>
<dbReference type="GO" id="GO:0031145">
    <property type="term" value="P:anaphase-promoting complex-dependent catabolic process"/>
    <property type="evidence" value="ECO:0000250"/>
    <property type="project" value="UniProtKB"/>
</dbReference>
<dbReference type="GO" id="GO:0051301">
    <property type="term" value="P:cell division"/>
    <property type="evidence" value="ECO:0007669"/>
    <property type="project" value="UniProtKB-KW"/>
</dbReference>
<dbReference type="GO" id="GO:0141198">
    <property type="term" value="P:protein branched polyubiquitination"/>
    <property type="evidence" value="ECO:0000250"/>
    <property type="project" value="UniProtKB"/>
</dbReference>
<dbReference type="GO" id="GO:0070979">
    <property type="term" value="P:protein K11-linked ubiquitination"/>
    <property type="evidence" value="ECO:0000250"/>
    <property type="project" value="UniProtKB"/>
</dbReference>
<dbReference type="GO" id="GO:0070936">
    <property type="term" value="P:protein K48-linked ubiquitination"/>
    <property type="evidence" value="ECO:0000250"/>
    <property type="project" value="UniProtKB"/>
</dbReference>
<dbReference type="Gene3D" id="1.25.40.10">
    <property type="entry name" value="Tetratricopeptide repeat domain"/>
    <property type="match status" value="1"/>
</dbReference>
<dbReference type="InterPro" id="IPR011990">
    <property type="entry name" value="TPR-like_helical_dom_sf"/>
</dbReference>
<dbReference type="InterPro" id="IPR019734">
    <property type="entry name" value="TPR_rpt"/>
</dbReference>
<dbReference type="PANTHER" id="PTHR12558">
    <property type="entry name" value="CELL DIVISION CYCLE 16,23,27"/>
    <property type="match status" value="1"/>
</dbReference>
<dbReference type="PANTHER" id="PTHR12558:SF9">
    <property type="entry name" value="CELL DIVISION CYCLE PROTEIN 16 HOMOLOG"/>
    <property type="match status" value="1"/>
</dbReference>
<dbReference type="Pfam" id="PF12895">
    <property type="entry name" value="ANAPC3"/>
    <property type="match status" value="1"/>
</dbReference>
<dbReference type="Pfam" id="PF13424">
    <property type="entry name" value="TPR_12"/>
    <property type="match status" value="1"/>
</dbReference>
<dbReference type="SMART" id="SM00028">
    <property type="entry name" value="TPR"/>
    <property type="match status" value="6"/>
</dbReference>
<dbReference type="SUPFAM" id="SSF48452">
    <property type="entry name" value="TPR-like"/>
    <property type="match status" value="2"/>
</dbReference>
<dbReference type="PROSITE" id="PS50005">
    <property type="entry name" value="TPR"/>
    <property type="match status" value="5"/>
</dbReference>
<dbReference type="PROSITE" id="PS50293">
    <property type="entry name" value="TPR_REGION"/>
    <property type="match status" value="1"/>
</dbReference>
<feature type="chain" id="PRO_0000106268" description="Cell division cycle protein 16 homolog">
    <location>
        <begin position="1"/>
        <end position="620"/>
    </location>
</feature>
<feature type="repeat" description="TPR 1">
    <location>
        <begin position="4"/>
        <end position="33"/>
    </location>
</feature>
<feature type="repeat" description="TPR 2">
    <location>
        <begin position="37"/>
        <end position="62"/>
    </location>
</feature>
<feature type="repeat" description="TPR 3">
    <location>
        <begin position="70"/>
        <end position="93"/>
    </location>
</feature>
<feature type="repeat" description="TPR 4">
    <location>
        <begin position="128"/>
        <end position="159"/>
    </location>
</feature>
<feature type="repeat" description="TPR 5">
    <location>
        <begin position="164"/>
        <end position="187"/>
    </location>
</feature>
<feature type="repeat" description="TPR 6">
    <location>
        <begin position="198"/>
        <end position="222"/>
    </location>
</feature>
<feature type="repeat" description="TPR 7">
    <location>
        <begin position="232"/>
        <end position="260"/>
    </location>
</feature>
<feature type="repeat" description="TPR 8">
    <location>
        <begin position="267"/>
        <end position="294"/>
    </location>
</feature>
<feature type="repeat" description="TPR 9">
    <location>
        <begin position="299"/>
        <end position="329"/>
    </location>
</feature>
<feature type="repeat" description="TPR 10">
    <location>
        <begin position="334"/>
        <end position="362"/>
    </location>
</feature>
<feature type="repeat" description="TPR 11">
    <location>
        <begin position="369"/>
        <end position="397"/>
    </location>
</feature>
<feature type="repeat" description="TPR 12">
    <location>
        <begin position="402"/>
        <end position="434"/>
    </location>
</feature>
<feature type="repeat" description="TPR 13">
    <location>
        <begin position="442"/>
        <end position="474"/>
    </location>
</feature>
<feature type="repeat" description="TPR 14">
    <location>
        <begin position="479"/>
        <end position="508"/>
    </location>
</feature>
<feature type="region of interest" description="Disordered" evidence="2">
    <location>
        <begin position="577"/>
        <end position="596"/>
    </location>
</feature>
<feature type="modified residue" description="Phosphoserine" evidence="1">
    <location>
        <position position="490"/>
    </location>
</feature>
<feature type="modified residue" description="Phosphoserine" evidence="4">
    <location>
        <position position="560"/>
    </location>
</feature>
<feature type="modified residue" description="Phosphothreonine" evidence="1">
    <location>
        <position position="599"/>
    </location>
</feature>
<organism>
    <name type="scientific">Mus musculus</name>
    <name type="common">Mouse</name>
    <dbReference type="NCBI Taxonomy" id="10090"/>
    <lineage>
        <taxon>Eukaryota</taxon>
        <taxon>Metazoa</taxon>
        <taxon>Chordata</taxon>
        <taxon>Craniata</taxon>
        <taxon>Vertebrata</taxon>
        <taxon>Euteleostomi</taxon>
        <taxon>Mammalia</taxon>
        <taxon>Eutheria</taxon>
        <taxon>Euarchontoglires</taxon>
        <taxon>Glires</taxon>
        <taxon>Rodentia</taxon>
        <taxon>Myomorpha</taxon>
        <taxon>Muroidea</taxon>
        <taxon>Muridae</taxon>
        <taxon>Murinae</taxon>
        <taxon>Mus</taxon>
        <taxon>Mus</taxon>
    </lineage>
</organism>
<sequence length="620" mass="71460">MNLEPLRKRVRQYLDQQQYQSALFWADKVASLSHEEPQDVYWLAQCLYLTAQYHRAAHALRSRKLDKLYEACRYLAARCHYAAKEHQQALDILDMEEPINRRLFEKYLKDDNGSRDPSSDWEMSQSSIKSSICLLRGKIYDALDNRTLATYSYKEALKLDVYCFEAFDLLTSHHMLTAQEEKELLDSLPLNKLCAEEQELLRFVFENKLKKYNKPSETVIPESVDGLQENLDVVVSLAERHYYNCDFKMCYKLTSTVMEKDPFHANCLPVHIGTLVELNKANELFYLSHKLVDLYPSNPVSWFAVGCYYLMVGHKNEHARRYLSKATTLEKTYGPAWIAYGHSFAVESEHDQAMAAYFTAAQLMKGCHLPMLYIGLEYGLTNNSKLAERFFGQALSIAPEDPFVIHEVGVVAFQNGEWKTAEKWFLDALEKIKAIGNEVTVDKWEPLLNNLGHVCRKLKKYAEALDYHRQALVLIPQNASTYSAIGYIHSLMGNFENAVDYFHTALGLRRDDTFSVTMLGHCIEMYIGDSEAYIGADIKDKLKCYDFDVHTMKTLKNIISPPWDFRDFEVEKQNTEEAGLAPLQNSTKAPESRPNLEETFEIEMNESDMMLETSMSDHST</sequence>
<gene>
    <name type="primary">Cdc16</name>
    <name type="synonym">Anapc6</name>
</gene>
<evidence type="ECO:0000250" key="1">
    <source>
        <dbReference type="UniProtKB" id="Q13042"/>
    </source>
</evidence>
<evidence type="ECO:0000256" key="2">
    <source>
        <dbReference type="SAM" id="MobiDB-lite"/>
    </source>
</evidence>
<evidence type="ECO:0000305" key="3"/>
<evidence type="ECO:0007744" key="4">
    <source>
    </source>
</evidence>